<accession>A6NN92</accession>
<comment type="function">
    <text evidence="3">Mediates calcium-independent ATP release, suggesting activity as a hemichannel. Does not form functional gap junctions.</text>
</comment>
<comment type="subunit">
    <text evidence="1">A connexon is composed of a hexamer of connexins.</text>
</comment>
<comment type="subcellular location">
    <subcellularLocation>
        <location evidence="6">Cell membrane</location>
        <topology evidence="4">Multi-pass membrane protein</topology>
    </subcellularLocation>
</comment>
<comment type="tissue specificity">
    <text evidence="5">Not detected in lens or retina.</text>
</comment>
<comment type="similarity">
    <text evidence="6">Belongs to the connexin family. Beta-type (group I) subfamily.</text>
</comment>
<proteinExistence type="evidence at transcript level"/>
<feature type="chain" id="PRO_0000317611" description="Gap junction epsilon-1 protein">
    <location>
        <begin position="1"/>
        <end position="205"/>
    </location>
</feature>
<feature type="topological domain" description="Cytoplasmic" evidence="4">
    <location>
        <begin position="1"/>
        <end position="23"/>
    </location>
</feature>
<feature type="transmembrane region" description="Helical" evidence="4">
    <location>
        <begin position="24"/>
        <end position="44"/>
    </location>
</feature>
<feature type="topological domain" description="Extracellular" evidence="4">
    <location>
        <begin position="45"/>
        <end position="76"/>
    </location>
</feature>
<feature type="transmembrane region" description="Helical" evidence="4">
    <location>
        <begin position="77"/>
        <end position="97"/>
    </location>
</feature>
<feature type="topological domain" description="Cytoplasmic" evidence="4">
    <location>
        <begin position="98"/>
        <end position="112"/>
    </location>
</feature>
<feature type="transmembrane region" description="Helical" evidence="4">
    <location>
        <begin position="113"/>
        <end position="133"/>
    </location>
</feature>
<feature type="topological domain" description="Extracellular" evidence="4">
    <location>
        <begin position="134"/>
        <end position="170"/>
    </location>
</feature>
<feature type="transmembrane region" description="Helical" evidence="4">
    <location>
        <begin position="171"/>
        <end position="191"/>
    </location>
</feature>
<feature type="topological domain" description="Cytoplasmic" evidence="4">
    <location>
        <begin position="192"/>
        <end position="205"/>
    </location>
</feature>
<feature type="disulfide bond" evidence="2">
    <location>
        <begin position="53"/>
        <end position="161"/>
    </location>
</feature>
<feature type="disulfide bond" evidence="2">
    <location>
        <begin position="64"/>
        <end position="148"/>
    </location>
</feature>
<protein>
    <recommendedName>
        <fullName evidence="6">Gap junction epsilon-1 protein</fullName>
    </recommendedName>
    <alternativeName>
        <fullName>Connexin-23</fullName>
        <shortName>Cx23</shortName>
    </alternativeName>
</protein>
<sequence length="205" mass="23755">MSLNYIKNFYEGCVKPPTVIGQFHTLFFGSIRIFFLGVLGFAVYGNEALHFICDPDKREVNLFCYNQFRPITPQVSFSALQLVIVLVPGALFHLYAACKSINQECILQKPIYTIIYILSVLLRISLAAIAFWLQIYLFGFQVKSLYLCDARSLGENMIIRCMVPEHFEKTIFLIAINTFTTITILLFVAEIFEIIFRRLYFPFRQ</sequence>
<keyword id="KW-1003">Cell membrane</keyword>
<keyword id="KW-1015">Disulfide bond</keyword>
<keyword id="KW-0472">Membrane</keyword>
<keyword id="KW-1185">Reference proteome</keyword>
<keyword id="KW-0812">Transmembrane</keyword>
<keyword id="KW-1133">Transmembrane helix</keyword>
<gene>
    <name type="primary">GJE1</name>
</gene>
<evidence type="ECO:0000250" key="1">
    <source>
        <dbReference type="UniProtKB" id="P08050"/>
    </source>
</evidence>
<evidence type="ECO:0000250" key="2">
    <source>
        <dbReference type="UniProtKB" id="P29033"/>
    </source>
</evidence>
<evidence type="ECO:0000250" key="3">
    <source>
        <dbReference type="UniProtKB" id="Q9CX92"/>
    </source>
</evidence>
<evidence type="ECO:0000255" key="4"/>
<evidence type="ECO:0000269" key="5">
    <source>
    </source>
</evidence>
<evidence type="ECO:0000305" key="6"/>
<reference key="1">
    <citation type="journal article" date="2003" name="Nature">
        <title>The DNA sequence and analysis of human chromosome 6.</title>
        <authorList>
            <person name="Mungall A.J."/>
            <person name="Palmer S.A."/>
            <person name="Sims S.K."/>
            <person name="Edwards C.A."/>
            <person name="Ashurst J.L."/>
            <person name="Wilming L."/>
            <person name="Jones M.C."/>
            <person name="Horton R."/>
            <person name="Hunt S.E."/>
            <person name="Scott C.E."/>
            <person name="Gilbert J.G.R."/>
            <person name="Clamp M.E."/>
            <person name="Bethel G."/>
            <person name="Milne S."/>
            <person name="Ainscough R."/>
            <person name="Almeida J.P."/>
            <person name="Ambrose K.D."/>
            <person name="Andrews T.D."/>
            <person name="Ashwell R.I.S."/>
            <person name="Babbage A.K."/>
            <person name="Bagguley C.L."/>
            <person name="Bailey J."/>
            <person name="Banerjee R."/>
            <person name="Barker D.J."/>
            <person name="Barlow K.F."/>
            <person name="Bates K."/>
            <person name="Beare D.M."/>
            <person name="Beasley H."/>
            <person name="Beasley O."/>
            <person name="Bird C.P."/>
            <person name="Blakey S.E."/>
            <person name="Bray-Allen S."/>
            <person name="Brook J."/>
            <person name="Brown A.J."/>
            <person name="Brown J.Y."/>
            <person name="Burford D.C."/>
            <person name="Burrill W."/>
            <person name="Burton J."/>
            <person name="Carder C."/>
            <person name="Carter N.P."/>
            <person name="Chapman J.C."/>
            <person name="Clark S.Y."/>
            <person name="Clark G."/>
            <person name="Clee C.M."/>
            <person name="Clegg S."/>
            <person name="Cobley V."/>
            <person name="Collier R.E."/>
            <person name="Collins J.E."/>
            <person name="Colman L.K."/>
            <person name="Corby N.R."/>
            <person name="Coville G.J."/>
            <person name="Culley K.M."/>
            <person name="Dhami P."/>
            <person name="Davies J."/>
            <person name="Dunn M."/>
            <person name="Earthrowl M.E."/>
            <person name="Ellington A.E."/>
            <person name="Evans K.A."/>
            <person name="Faulkner L."/>
            <person name="Francis M.D."/>
            <person name="Frankish A."/>
            <person name="Frankland J."/>
            <person name="French L."/>
            <person name="Garner P."/>
            <person name="Garnett J."/>
            <person name="Ghori M.J."/>
            <person name="Gilby L.M."/>
            <person name="Gillson C.J."/>
            <person name="Glithero R.J."/>
            <person name="Grafham D.V."/>
            <person name="Grant M."/>
            <person name="Gribble S."/>
            <person name="Griffiths C."/>
            <person name="Griffiths M.N.D."/>
            <person name="Hall R."/>
            <person name="Halls K.S."/>
            <person name="Hammond S."/>
            <person name="Harley J.L."/>
            <person name="Hart E.A."/>
            <person name="Heath P.D."/>
            <person name="Heathcott R."/>
            <person name="Holmes S.J."/>
            <person name="Howden P.J."/>
            <person name="Howe K.L."/>
            <person name="Howell G.R."/>
            <person name="Huckle E."/>
            <person name="Humphray S.J."/>
            <person name="Humphries M.D."/>
            <person name="Hunt A.R."/>
            <person name="Johnson C.M."/>
            <person name="Joy A.A."/>
            <person name="Kay M."/>
            <person name="Keenan S.J."/>
            <person name="Kimberley A.M."/>
            <person name="King A."/>
            <person name="Laird G.K."/>
            <person name="Langford C."/>
            <person name="Lawlor S."/>
            <person name="Leongamornlert D.A."/>
            <person name="Leversha M."/>
            <person name="Lloyd C.R."/>
            <person name="Lloyd D.M."/>
            <person name="Loveland J.E."/>
            <person name="Lovell J."/>
            <person name="Martin S."/>
            <person name="Mashreghi-Mohammadi M."/>
            <person name="Maslen G.L."/>
            <person name="Matthews L."/>
            <person name="McCann O.T."/>
            <person name="McLaren S.J."/>
            <person name="McLay K."/>
            <person name="McMurray A."/>
            <person name="Moore M.J.F."/>
            <person name="Mullikin J.C."/>
            <person name="Niblett D."/>
            <person name="Nickerson T."/>
            <person name="Novik K.L."/>
            <person name="Oliver K."/>
            <person name="Overton-Larty E.K."/>
            <person name="Parker A."/>
            <person name="Patel R."/>
            <person name="Pearce A.V."/>
            <person name="Peck A.I."/>
            <person name="Phillimore B.J.C.T."/>
            <person name="Phillips S."/>
            <person name="Plumb R.W."/>
            <person name="Porter K.M."/>
            <person name="Ramsey Y."/>
            <person name="Ranby S.A."/>
            <person name="Rice C.M."/>
            <person name="Ross M.T."/>
            <person name="Searle S.M."/>
            <person name="Sehra H.K."/>
            <person name="Sheridan E."/>
            <person name="Skuce C.D."/>
            <person name="Smith S."/>
            <person name="Smith M."/>
            <person name="Spraggon L."/>
            <person name="Squares S.L."/>
            <person name="Steward C.A."/>
            <person name="Sycamore N."/>
            <person name="Tamlyn-Hall G."/>
            <person name="Tester J."/>
            <person name="Theaker A.J."/>
            <person name="Thomas D.W."/>
            <person name="Thorpe A."/>
            <person name="Tracey A."/>
            <person name="Tromans A."/>
            <person name="Tubby B."/>
            <person name="Wall M."/>
            <person name="Wallis J.M."/>
            <person name="West A.P."/>
            <person name="White S.S."/>
            <person name="Whitehead S.L."/>
            <person name="Whittaker H."/>
            <person name="Wild A."/>
            <person name="Willey D.J."/>
            <person name="Wilmer T.E."/>
            <person name="Wood J.M."/>
            <person name="Wray P.W."/>
            <person name="Wyatt J.C."/>
            <person name="Young L."/>
            <person name="Younger R.M."/>
            <person name="Bentley D.R."/>
            <person name="Coulson A."/>
            <person name="Durbin R.M."/>
            <person name="Hubbard T."/>
            <person name="Sulston J.E."/>
            <person name="Dunham I."/>
            <person name="Rogers J."/>
            <person name="Beck S."/>
        </authorList>
    </citation>
    <scope>NUCLEOTIDE SEQUENCE [LARGE SCALE GENOMIC DNA]</scope>
</reference>
<reference key="2">
    <citation type="journal article" date="2009" name="Eur. J. Cell Biol.">
        <title>Mouse lens connexin23 (Gje1) does not form functional gap junction channels but causes enhanced ATP release from HeLa cells.</title>
        <authorList>
            <person name="Sonntag S."/>
            <person name="Soehl G."/>
            <person name="Dobrowolski R."/>
            <person name="Zhang J."/>
            <person name="Theis M."/>
            <person name="Winterhager E."/>
            <person name="Bukauskas F.F."/>
            <person name="Willecke K."/>
        </authorList>
    </citation>
    <scope>TISSUE SPECIFICITY</scope>
</reference>
<dbReference type="EMBL" id="AL033522">
    <property type="status" value="NOT_ANNOTATED_CDS"/>
    <property type="molecule type" value="Genomic_DNA"/>
</dbReference>
<dbReference type="CCDS" id="CCDS87449.1"/>
<dbReference type="RefSeq" id="NP_001345339.1">
    <property type="nucleotide sequence ID" value="NM_001358410.2"/>
</dbReference>
<dbReference type="SMR" id="A6NN92"/>
<dbReference type="FunCoup" id="A6NN92">
    <property type="interactions" value="4"/>
</dbReference>
<dbReference type="STRING" id="9606.ENSP00000455469"/>
<dbReference type="BioMuta" id="GJE1"/>
<dbReference type="jPOST" id="A6NN92"/>
<dbReference type="MassIVE" id="A6NN92"/>
<dbReference type="PaxDb" id="9606-ENSP00000455469"/>
<dbReference type="PeptideAtlas" id="A6NN92"/>
<dbReference type="Antibodypedia" id="8535">
    <property type="antibodies" value="27 antibodies from 9 providers"/>
</dbReference>
<dbReference type="Ensembl" id="ENST00000450456.3">
    <property type="protein sequence ID" value="ENSP00000455469.1"/>
    <property type="gene ID" value="ENSG00000203733.6"/>
</dbReference>
<dbReference type="GeneID" id="100126572"/>
<dbReference type="MANE-Select" id="ENST00000450456.3">
    <property type="protein sequence ID" value="ENSP00000455469.1"/>
    <property type="RefSeq nucleotide sequence ID" value="NM_001358410.2"/>
    <property type="RefSeq protein sequence ID" value="NP_001345339.1"/>
</dbReference>
<dbReference type="UCSC" id="uc063rxt.1">
    <property type="organism name" value="human"/>
</dbReference>
<dbReference type="AGR" id="HGNC:33251"/>
<dbReference type="GeneCards" id="GJE1"/>
<dbReference type="HGNC" id="HGNC:33251">
    <property type="gene designation" value="GJE1"/>
</dbReference>
<dbReference type="HPA" id="ENSG00000203733">
    <property type="expression patterns" value="Not detected"/>
</dbReference>
<dbReference type="neXtProt" id="NX_A6NN92"/>
<dbReference type="OpenTargets" id="ENSG00000203733"/>
<dbReference type="VEuPathDB" id="HostDB:ENSG00000203733"/>
<dbReference type="eggNOG" id="ENOG502RVMN">
    <property type="taxonomic scope" value="Eukaryota"/>
</dbReference>
<dbReference type="GeneTree" id="ENSGT01130000278343"/>
<dbReference type="HOGENOM" id="CLU_115891_0_0_1"/>
<dbReference type="InParanoid" id="A6NN92"/>
<dbReference type="OMA" id="WLQIYLF"/>
<dbReference type="OrthoDB" id="8719005at2759"/>
<dbReference type="PAN-GO" id="A6NN92">
    <property type="GO annotations" value="3 GO annotations based on evolutionary models"/>
</dbReference>
<dbReference type="PhylomeDB" id="A6NN92"/>
<dbReference type="PathwayCommons" id="A6NN92"/>
<dbReference type="SignaLink" id="A6NN92"/>
<dbReference type="Pharos" id="A6NN92">
    <property type="development level" value="Tdark"/>
</dbReference>
<dbReference type="PRO" id="PR:A6NN92"/>
<dbReference type="Proteomes" id="UP000005640">
    <property type="component" value="Chromosome 6"/>
</dbReference>
<dbReference type="RNAct" id="A6NN92">
    <property type="molecule type" value="protein"/>
</dbReference>
<dbReference type="Bgee" id="ENSG00000203733">
    <property type="expression patterns" value="Expressed in primordial germ cell in gonad"/>
</dbReference>
<dbReference type="ExpressionAtlas" id="A6NN92">
    <property type="expression patterns" value="baseline and differential"/>
</dbReference>
<dbReference type="GO" id="GO:0005922">
    <property type="term" value="C:connexin complex"/>
    <property type="evidence" value="ECO:0000318"/>
    <property type="project" value="GO_Central"/>
</dbReference>
<dbReference type="GO" id="GO:0005243">
    <property type="term" value="F:gap junction channel activity"/>
    <property type="evidence" value="ECO:0000318"/>
    <property type="project" value="GO_Central"/>
</dbReference>
<dbReference type="GO" id="GO:0000902">
    <property type="term" value="P:cell morphogenesis"/>
    <property type="evidence" value="ECO:0007669"/>
    <property type="project" value="Ensembl"/>
</dbReference>
<dbReference type="GO" id="GO:0007267">
    <property type="term" value="P:cell-cell signaling"/>
    <property type="evidence" value="ECO:0000318"/>
    <property type="project" value="GO_Central"/>
</dbReference>
<dbReference type="GO" id="GO:0002088">
    <property type="term" value="P:lens development in camera-type eye"/>
    <property type="evidence" value="ECO:0007669"/>
    <property type="project" value="Ensembl"/>
</dbReference>
<dbReference type="GO" id="GO:0035265">
    <property type="term" value="P:organ growth"/>
    <property type="evidence" value="ECO:0007669"/>
    <property type="project" value="Ensembl"/>
</dbReference>
<dbReference type="Gene3D" id="1.20.1440.80">
    <property type="entry name" value="Gap junction channel protein cysteine-rich domain"/>
    <property type="match status" value="1"/>
</dbReference>
<dbReference type="InterPro" id="IPR000500">
    <property type="entry name" value="Connexin"/>
</dbReference>
<dbReference type="InterPro" id="IPR019570">
    <property type="entry name" value="Connexin_CCC"/>
</dbReference>
<dbReference type="InterPro" id="IPR013092">
    <property type="entry name" value="Connexin_N"/>
</dbReference>
<dbReference type="InterPro" id="IPR038359">
    <property type="entry name" value="Connexin_N_sf"/>
</dbReference>
<dbReference type="PANTHER" id="PTHR11984">
    <property type="entry name" value="CONNEXIN"/>
    <property type="match status" value="1"/>
</dbReference>
<dbReference type="PANTHER" id="PTHR11984:SF1">
    <property type="entry name" value="GAP JUNCTION EPSILON-1 PROTEIN-RELATED"/>
    <property type="match status" value="1"/>
</dbReference>
<dbReference type="Pfam" id="PF00029">
    <property type="entry name" value="Connexin"/>
    <property type="match status" value="2"/>
</dbReference>
<dbReference type="SMART" id="SM01089">
    <property type="entry name" value="Connexin_CCC"/>
    <property type="match status" value="1"/>
</dbReference>
<organism>
    <name type="scientific">Homo sapiens</name>
    <name type="common">Human</name>
    <dbReference type="NCBI Taxonomy" id="9606"/>
    <lineage>
        <taxon>Eukaryota</taxon>
        <taxon>Metazoa</taxon>
        <taxon>Chordata</taxon>
        <taxon>Craniata</taxon>
        <taxon>Vertebrata</taxon>
        <taxon>Euteleostomi</taxon>
        <taxon>Mammalia</taxon>
        <taxon>Eutheria</taxon>
        <taxon>Euarchontoglires</taxon>
        <taxon>Primates</taxon>
        <taxon>Haplorrhini</taxon>
        <taxon>Catarrhini</taxon>
        <taxon>Hominidae</taxon>
        <taxon>Homo</taxon>
    </lineage>
</organism>
<name>CXE1_HUMAN</name>